<name>VTC1A_DANRE</name>
<evidence type="ECO:0000250" key="1"/>
<evidence type="ECO:0000250" key="2">
    <source>
        <dbReference type="UniProtKB" id="P21282"/>
    </source>
</evidence>
<evidence type="ECO:0000250" key="3">
    <source>
        <dbReference type="UniProtKB" id="P21283"/>
    </source>
</evidence>
<evidence type="ECO:0000250" key="4">
    <source>
        <dbReference type="UniProtKB" id="P31412"/>
    </source>
</evidence>
<evidence type="ECO:0000305" key="5"/>
<protein>
    <recommendedName>
        <fullName>V-type proton ATPase subunit C 1-A</fullName>
        <shortName>V-ATPase subunit C 1-A</shortName>
    </recommendedName>
    <alternativeName>
        <fullName>Vacuolar proton pump subunit C 1-A</fullName>
    </alternativeName>
</protein>
<comment type="function">
    <text evidence="2 3 4">Subunit of the V1 complex of vacuolar(H+)-ATPase (V-ATPase), a multisubunit enzyme composed of a peripheral complex (V1) that hydrolyzes ATP and a membrane integral complex (V0) that translocates protons (By similarity). V-ATPase is responsible for acidifying and maintaining the pH of intracellular compartments and in some cell types, is targeted to the plasma membrane, where it is responsible for acidifying the extracellular environment (By similarity). Subunit C is necessary for the assembly of the catalytic sector of the enzyme and is likely to have a specific function in its catalytic activity (By similarity).</text>
</comment>
<comment type="subunit">
    <text evidence="3">V-ATPase is a heteromultimeric enzyme made up of two complexes: the ATP-hydrolytic V1 complex and the proton translocation V0 complex (By similarity). The V1 complex consists of three catalytic AB heterodimers that form a heterohexamer, three peripheral stalks each consisting of EG heterodimers, one central rotor including subunits D and F, and the regulatory subunits C and H (By similarity). The proton translocation complex V0 consists of the proton transport subunit a, a ring of proteolipid subunits c9c'', rotary subunit d, subunits e and f, and two accessory subunits (By similarity).</text>
</comment>
<comment type="similarity">
    <text evidence="5">Belongs to the V-ATPase C subunit family.</text>
</comment>
<reference key="1">
    <citation type="submission" date="2003-06" db="EMBL/GenBank/DDBJ databases">
        <authorList>
            <consortium name="NIH - Zebrafish Gene Collection (ZGC) project"/>
        </authorList>
    </citation>
    <scope>NUCLEOTIDE SEQUENCE [LARGE SCALE MRNA]</scope>
    <source>
        <tissue>Kidney</tissue>
    </source>
</reference>
<gene>
    <name type="primary">atp6v1c1a</name>
    <name type="synonym">atp6v1c1</name>
    <name type="ORF">zgc:64034</name>
</gene>
<organism>
    <name type="scientific">Danio rerio</name>
    <name type="common">Zebrafish</name>
    <name type="synonym">Brachydanio rerio</name>
    <dbReference type="NCBI Taxonomy" id="7955"/>
    <lineage>
        <taxon>Eukaryota</taxon>
        <taxon>Metazoa</taxon>
        <taxon>Chordata</taxon>
        <taxon>Craniata</taxon>
        <taxon>Vertebrata</taxon>
        <taxon>Euteleostomi</taxon>
        <taxon>Actinopterygii</taxon>
        <taxon>Neopterygii</taxon>
        <taxon>Teleostei</taxon>
        <taxon>Ostariophysi</taxon>
        <taxon>Cypriniformes</taxon>
        <taxon>Danionidae</taxon>
        <taxon>Danioninae</taxon>
        <taxon>Danio</taxon>
    </lineage>
</organism>
<keyword id="KW-0007">Acetylation</keyword>
<keyword id="KW-0375">Hydrogen ion transport</keyword>
<keyword id="KW-0406">Ion transport</keyword>
<keyword id="KW-1185">Reference proteome</keyword>
<keyword id="KW-0813">Transport</keyword>
<proteinExistence type="evidence at transcript level"/>
<accession>Q7T385</accession>
<sequence>MTEFWLISAPGEKTCQQTWDKLMTATTRTNNLSTNNKFNIPDLKVGTLDVLVGLSDELAKLDAFVESVVKKVAQYMADVLEDSRDKVQENLLANGVDLVTYVTRFQWDMAKYPIKQSLKNISEIISKQVSQIDNDLKARASAYNNLKGNLQNLERKNAGSLLTRSLADIVKKDDFVLDSEYLITLLVVVPKTNYTDWQRTYETLAEMVVPRSTNLLFEDHDSGLFTVTLFRKAIDDFRHKARENKFTVRDFQYNEEEMKADKEEMTRLSTDKKKQFGPLVRWLKVNFSEAFIAWVHIKALRVFVESVLRYGLPVNFQAMLLQPNKKNMKKLREVLYDLYKHLDSSAAAIIDQSAMDIPGLNLSQQEYYPYVYYKIDCNLLDFK</sequence>
<dbReference type="EMBL" id="BC053214">
    <property type="protein sequence ID" value="AAH53214.1"/>
    <property type="molecule type" value="mRNA"/>
</dbReference>
<dbReference type="RefSeq" id="NP_958479.1">
    <property type="nucleotide sequence ID" value="NM_201322.1"/>
</dbReference>
<dbReference type="SMR" id="Q7T385"/>
<dbReference type="FunCoup" id="Q7T385">
    <property type="interactions" value="2339"/>
</dbReference>
<dbReference type="STRING" id="7955.ENSDARP00000029343"/>
<dbReference type="PaxDb" id="7955-ENSDARP00000029343"/>
<dbReference type="Ensembl" id="ENSDART00000032275">
    <property type="protein sequence ID" value="ENSDARP00000029343"/>
    <property type="gene ID" value="ENSDARG00000023967"/>
</dbReference>
<dbReference type="Ensembl" id="ENSDART00000191807">
    <property type="protein sequence ID" value="ENSDARP00000147247"/>
    <property type="gene ID" value="ENSDARG00000023967"/>
</dbReference>
<dbReference type="GeneID" id="368907"/>
<dbReference type="KEGG" id="dre:368907"/>
<dbReference type="AGR" id="ZFIN:ZDB-GENE-030616-612"/>
<dbReference type="CTD" id="368907"/>
<dbReference type="ZFIN" id="ZDB-GENE-030616-612">
    <property type="gene designation" value="atp6v1c1a"/>
</dbReference>
<dbReference type="eggNOG" id="KOG2909">
    <property type="taxonomic scope" value="Eukaryota"/>
</dbReference>
<dbReference type="HOGENOM" id="CLU_017554_3_0_1"/>
<dbReference type="InParanoid" id="Q7T385"/>
<dbReference type="OMA" id="SEGFIAW"/>
<dbReference type="OrthoDB" id="6605928at2759"/>
<dbReference type="PhylomeDB" id="Q7T385"/>
<dbReference type="TreeFam" id="TF314912"/>
<dbReference type="Reactome" id="R-DRE-1222556">
    <property type="pathway name" value="ROS and RNS production in phagocytes"/>
</dbReference>
<dbReference type="Reactome" id="R-DRE-77387">
    <property type="pathway name" value="Insulin receptor recycling"/>
</dbReference>
<dbReference type="Reactome" id="R-DRE-917977">
    <property type="pathway name" value="Transferrin endocytosis and recycling"/>
</dbReference>
<dbReference type="Reactome" id="R-DRE-9639288">
    <property type="pathway name" value="Amino acids regulate mTORC1"/>
</dbReference>
<dbReference type="PRO" id="PR:Q7T385"/>
<dbReference type="Proteomes" id="UP000000437">
    <property type="component" value="Chromosome 16"/>
</dbReference>
<dbReference type="Bgee" id="ENSDARG00000023967">
    <property type="expression patterns" value="Expressed in brain and 28 other cell types or tissues"/>
</dbReference>
<dbReference type="ExpressionAtlas" id="Q7T385">
    <property type="expression patterns" value="baseline and differential"/>
</dbReference>
<dbReference type="GO" id="GO:0000221">
    <property type="term" value="C:vacuolar proton-transporting V-type ATPase, V1 domain"/>
    <property type="evidence" value="ECO:0000318"/>
    <property type="project" value="GO_Central"/>
</dbReference>
<dbReference type="GO" id="GO:0046961">
    <property type="term" value="F:proton-transporting ATPase activity, rotational mechanism"/>
    <property type="evidence" value="ECO:0000318"/>
    <property type="project" value="GO_Central"/>
</dbReference>
<dbReference type="CDD" id="cd14785">
    <property type="entry name" value="V-ATPase_C"/>
    <property type="match status" value="1"/>
</dbReference>
<dbReference type="FunFam" id="1.20.1460.10:FF:000004">
    <property type="entry name" value="V-type proton ATPase subunit C"/>
    <property type="match status" value="1"/>
</dbReference>
<dbReference type="FunFam" id="3.30.70.100:FF:000002">
    <property type="entry name" value="V-type proton ATPase subunit C"/>
    <property type="match status" value="1"/>
</dbReference>
<dbReference type="FunFam" id="3.30.70.1180:FF:000003">
    <property type="entry name" value="V-type proton ATPase subunit C"/>
    <property type="match status" value="1"/>
</dbReference>
<dbReference type="Gene3D" id="3.30.70.100">
    <property type="match status" value="1"/>
</dbReference>
<dbReference type="Gene3D" id="1.20.1460.10">
    <property type="entry name" value="subunit c (vma5p) of the yeast v-atpase, domain 2"/>
    <property type="match status" value="1"/>
</dbReference>
<dbReference type="Gene3D" id="3.30.70.1180">
    <property type="entry name" value="Vacuolar atp synthase subunit c, domain 1"/>
    <property type="match status" value="1"/>
</dbReference>
<dbReference type="InterPro" id="IPR004907">
    <property type="entry name" value="ATPase_V1-cplx_csu"/>
</dbReference>
<dbReference type="InterPro" id="IPR036132">
    <property type="entry name" value="Vac_ATP_synth_c_sf"/>
</dbReference>
<dbReference type="PANTHER" id="PTHR10137">
    <property type="entry name" value="V-TYPE PROTON ATPASE SUBUNIT C"/>
    <property type="match status" value="1"/>
</dbReference>
<dbReference type="PANTHER" id="PTHR10137:SF5">
    <property type="entry name" value="V-TYPE PROTON ATPASE SUBUNIT C 1"/>
    <property type="match status" value="1"/>
</dbReference>
<dbReference type="Pfam" id="PF03223">
    <property type="entry name" value="V-ATPase_C"/>
    <property type="match status" value="1"/>
</dbReference>
<dbReference type="SUPFAM" id="SSF118203">
    <property type="entry name" value="Vacuolar ATP synthase subunit C"/>
    <property type="match status" value="1"/>
</dbReference>
<feature type="initiator methionine" description="Removed" evidence="1">
    <location>
        <position position="1"/>
    </location>
</feature>
<feature type="chain" id="PRO_0000285666" description="V-type proton ATPase subunit C 1-A">
    <location>
        <begin position="2"/>
        <end position="383"/>
    </location>
</feature>
<feature type="modified residue" description="N-acetylthreonine" evidence="1">
    <location>
        <position position="2"/>
    </location>
</feature>